<proteinExistence type="evidence at protein level"/>
<name>VA711_ARATH</name>
<evidence type="ECO:0000250" key="1">
    <source>
        <dbReference type="UniProtKB" id="Q12255"/>
    </source>
</evidence>
<evidence type="ECO:0000255" key="2"/>
<evidence type="ECO:0000255" key="3">
    <source>
        <dbReference type="PROSITE-ProRule" id="PRU00231"/>
    </source>
</evidence>
<evidence type="ECO:0000255" key="4">
    <source>
        <dbReference type="PROSITE-ProRule" id="PRU00290"/>
    </source>
</evidence>
<evidence type="ECO:0000269" key="5">
    <source>
    </source>
</evidence>
<evidence type="ECO:0000269" key="6">
    <source>
    </source>
</evidence>
<evidence type="ECO:0000303" key="7">
    <source>
    </source>
</evidence>
<evidence type="ECO:0000303" key="8">
    <source ref="1"/>
</evidence>
<evidence type="ECO:0000305" key="9"/>
<evidence type="ECO:0000305" key="10">
    <source>
    </source>
</evidence>
<evidence type="ECO:0000312" key="11">
    <source>
        <dbReference type="Araport" id="AT4G32150"/>
    </source>
</evidence>
<evidence type="ECO:0000312" key="12">
    <source>
        <dbReference type="EMBL" id="CAA16574.1"/>
    </source>
</evidence>
<evidence type="ECO:0007744" key="13">
    <source>
    </source>
</evidence>
<protein>
    <recommendedName>
        <fullName evidence="7">Vesicle-associated membrane protein 711</fullName>
        <shortName evidence="7">AtVAMP711</shortName>
    </recommendedName>
    <alternativeName>
        <fullName evidence="8">v-SNARE synaptobrevin 7C</fullName>
        <shortName evidence="8">AtVAMP7C</shortName>
    </alternativeName>
</protein>
<sequence length="219" mass="25039">MAILYALVARGTVVLSEFTATSTNASTIAKQILEKVPGDNDSNVSYSQDRYVFHVKRTDGLTVLCMAEETAGRRIPFAFLEDIHQRFVRTYGRAVHTALAYAMNEEFSRVLSQQIDYYSNDPNADRINRIKGEMNQVRGVMIENIDKVLDRGERLELLVDKTANMQGNTFRFRKQARRFRSNVWWRNCKLTVLLILLLLVIIYIAVAFLCHGPTLPSCI</sequence>
<comment type="function">
    <text evidence="10">Involved in the targeting and/or fusion of transport vesicles to their target membrane.</text>
</comment>
<comment type="subcellular location">
    <subcellularLocation>
        <location evidence="5">Vacuole membrane</location>
        <topology evidence="1">Single-pass type IV membrane protein</topology>
    </subcellularLocation>
    <subcellularLocation>
        <location evidence="5">Prevacuolar compartment membrane</location>
        <topology evidence="1">Single-pass type IV membrane protein</topology>
    </subcellularLocation>
</comment>
<comment type="tissue specificity">
    <text evidence="5">Expressed in flowers, leaves, stems and roots.</text>
</comment>
<comment type="domain">
    <text evidence="6">The longin domain is essential for the vacuolar and subcellular targeting.</text>
</comment>
<comment type="similarity">
    <text evidence="9">Belongs to the synaptobrevin family.</text>
</comment>
<accession>O49377</accession>
<dbReference type="EMBL" id="AF025332">
    <property type="protein sequence ID" value="AAD01748.1"/>
    <property type="molecule type" value="mRNA"/>
</dbReference>
<dbReference type="EMBL" id="AL021636">
    <property type="protein sequence ID" value="CAA16574.1"/>
    <property type="molecule type" value="Genomic_DNA"/>
</dbReference>
<dbReference type="EMBL" id="AL161580">
    <property type="protein sequence ID" value="CAB79933.1"/>
    <property type="molecule type" value="Genomic_DNA"/>
</dbReference>
<dbReference type="EMBL" id="CP002687">
    <property type="protein sequence ID" value="AEE86011.1"/>
    <property type="molecule type" value="Genomic_DNA"/>
</dbReference>
<dbReference type="EMBL" id="AF439840">
    <property type="protein sequence ID" value="AAL27509.1"/>
    <property type="molecule type" value="mRNA"/>
</dbReference>
<dbReference type="EMBL" id="AY125553">
    <property type="protein sequence ID" value="AAM78063.1"/>
    <property type="molecule type" value="mRNA"/>
</dbReference>
<dbReference type="EMBL" id="AY088128">
    <property type="protein sequence ID" value="AAM65673.1"/>
    <property type="molecule type" value="mRNA"/>
</dbReference>
<dbReference type="PIR" id="T04630">
    <property type="entry name" value="T04630"/>
</dbReference>
<dbReference type="RefSeq" id="NP_194942.1">
    <property type="nucleotide sequence ID" value="NM_119367.3"/>
</dbReference>
<dbReference type="SMR" id="O49377"/>
<dbReference type="BioGRID" id="14633">
    <property type="interactions" value="7"/>
</dbReference>
<dbReference type="FunCoup" id="O49377">
    <property type="interactions" value="2776"/>
</dbReference>
<dbReference type="IntAct" id="O49377">
    <property type="interactions" value="4"/>
</dbReference>
<dbReference type="STRING" id="3702.O49377"/>
<dbReference type="iPTMnet" id="O49377"/>
<dbReference type="SwissPalm" id="O49377"/>
<dbReference type="PaxDb" id="3702-AT4G32150.1"/>
<dbReference type="ProteomicsDB" id="242304"/>
<dbReference type="EnsemblPlants" id="AT4G32150.1">
    <property type="protein sequence ID" value="AT4G32150.1"/>
    <property type="gene ID" value="AT4G32150"/>
</dbReference>
<dbReference type="GeneID" id="829347"/>
<dbReference type="Gramene" id="AT4G32150.1">
    <property type="protein sequence ID" value="AT4G32150.1"/>
    <property type="gene ID" value="AT4G32150"/>
</dbReference>
<dbReference type="KEGG" id="ath:AT4G32150"/>
<dbReference type="Araport" id="AT4G32150"/>
<dbReference type="TAIR" id="AT4G32150">
    <property type="gene designation" value="VAMP711"/>
</dbReference>
<dbReference type="eggNOG" id="KOG0859">
    <property type="taxonomic scope" value="Eukaryota"/>
</dbReference>
<dbReference type="HOGENOM" id="CLU_064620_1_2_1"/>
<dbReference type="InParanoid" id="O49377"/>
<dbReference type="OMA" id="HYENRIV"/>
<dbReference type="OrthoDB" id="248747at2759"/>
<dbReference type="PhylomeDB" id="O49377"/>
<dbReference type="PRO" id="PR:O49377"/>
<dbReference type="Proteomes" id="UP000006548">
    <property type="component" value="Chromosome 4"/>
</dbReference>
<dbReference type="ExpressionAtlas" id="O49377">
    <property type="expression patterns" value="baseline and differential"/>
</dbReference>
<dbReference type="GO" id="GO:0000325">
    <property type="term" value="C:plant-type vacuole"/>
    <property type="evidence" value="ECO:0007005"/>
    <property type="project" value="TAIR"/>
</dbReference>
<dbReference type="GO" id="GO:0005886">
    <property type="term" value="C:plasma membrane"/>
    <property type="evidence" value="ECO:0007005"/>
    <property type="project" value="TAIR"/>
</dbReference>
<dbReference type="GO" id="GO:0005774">
    <property type="term" value="C:vacuolar membrane"/>
    <property type="evidence" value="ECO:0000314"/>
    <property type="project" value="TAIR"/>
</dbReference>
<dbReference type="GO" id="GO:0061025">
    <property type="term" value="P:membrane fusion"/>
    <property type="evidence" value="ECO:0000304"/>
    <property type="project" value="TAIR"/>
</dbReference>
<dbReference type="GO" id="GO:0015031">
    <property type="term" value="P:protein transport"/>
    <property type="evidence" value="ECO:0007669"/>
    <property type="project" value="UniProtKB-KW"/>
</dbReference>
<dbReference type="GO" id="GO:0009737">
    <property type="term" value="P:response to abscisic acid"/>
    <property type="evidence" value="ECO:0000315"/>
    <property type="project" value="TAIR"/>
</dbReference>
<dbReference type="GO" id="GO:0009651">
    <property type="term" value="P:response to salt stress"/>
    <property type="evidence" value="ECO:0000315"/>
    <property type="project" value="TAIR"/>
</dbReference>
<dbReference type="GO" id="GO:0010118">
    <property type="term" value="P:stomatal movement"/>
    <property type="evidence" value="ECO:0000315"/>
    <property type="project" value="TAIR"/>
</dbReference>
<dbReference type="GO" id="GO:0016192">
    <property type="term" value="P:vesicle-mediated transport"/>
    <property type="evidence" value="ECO:0007669"/>
    <property type="project" value="InterPro"/>
</dbReference>
<dbReference type="CDD" id="cd14824">
    <property type="entry name" value="Longin"/>
    <property type="match status" value="1"/>
</dbReference>
<dbReference type="CDD" id="cd15843">
    <property type="entry name" value="R-SNARE"/>
    <property type="match status" value="1"/>
</dbReference>
<dbReference type="FunFam" id="1.20.5.110:FF:000004">
    <property type="entry name" value="Vesicle-associated membrane protein 7"/>
    <property type="match status" value="1"/>
</dbReference>
<dbReference type="FunFam" id="3.30.450.50:FF:000008">
    <property type="entry name" value="Vesicle-associated membrane protein 711"/>
    <property type="match status" value="1"/>
</dbReference>
<dbReference type="Gene3D" id="1.20.5.110">
    <property type="match status" value="1"/>
</dbReference>
<dbReference type="Gene3D" id="3.30.450.50">
    <property type="entry name" value="Longin domain"/>
    <property type="match status" value="1"/>
</dbReference>
<dbReference type="InterPro" id="IPR011012">
    <property type="entry name" value="Longin-like_dom_sf"/>
</dbReference>
<dbReference type="InterPro" id="IPR010908">
    <property type="entry name" value="Longin_dom"/>
</dbReference>
<dbReference type="InterPro" id="IPR001388">
    <property type="entry name" value="Synaptobrevin-like"/>
</dbReference>
<dbReference type="InterPro" id="IPR051097">
    <property type="entry name" value="Synaptobrevin-like_transport"/>
</dbReference>
<dbReference type="InterPro" id="IPR042855">
    <property type="entry name" value="V_SNARE_CC"/>
</dbReference>
<dbReference type="PANTHER" id="PTHR21136">
    <property type="entry name" value="SNARE PROTEINS"/>
    <property type="match status" value="1"/>
</dbReference>
<dbReference type="PANTHER" id="PTHR21136:SF172">
    <property type="entry name" value="VESICLE-ASSOCIATED MEMBRANE PROTEIN 711-RELATED"/>
    <property type="match status" value="1"/>
</dbReference>
<dbReference type="Pfam" id="PF13774">
    <property type="entry name" value="Longin"/>
    <property type="match status" value="1"/>
</dbReference>
<dbReference type="Pfam" id="PF00957">
    <property type="entry name" value="Synaptobrevin"/>
    <property type="match status" value="1"/>
</dbReference>
<dbReference type="PRINTS" id="PR00219">
    <property type="entry name" value="SYNAPTOBREVN"/>
</dbReference>
<dbReference type="SMART" id="SM01270">
    <property type="entry name" value="Longin"/>
    <property type="match status" value="1"/>
</dbReference>
<dbReference type="SUPFAM" id="SSF58038">
    <property type="entry name" value="SNARE fusion complex"/>
    <property type="match status" value="1"/>
</dbReference>
<dbReference type="SUPFAM" id="SSF64356">
    <property type="entry name" value="SNARE-like"/>
    <property type="match status" value="1"/>
</dbReference>
<dbReference type="PROSITE" id="PS50859">
    <property type="entry name" value="LONGIN"/>
    <property type="match status" value="1"/>
</dbReference>
<dbReference type="PROSITE" id="PS00417">
    <property type="entry name" value="SYNAPTOBREVIN"/>
    <property type="match status" value="1"/>
</dbReference>
<dbReference type="PROSITE" id="PS50892">
    <property type="entry name" value="V_SNARE"/>
    <property type="match status" value="1"/>
</dbReference>
<feature type="initiator methionine" description="Removed" evidence="13">
    <location>
        <position position="1"/>
    </location>
</feature>
<feature type="chain" id="PRO_0000206750" description="Vesicle-associated membrane protein 711">
    <location>
        <begin position="2"/>
        <end position="219"/>
    </location>
</feature>
<feature type="topological domain" description="Cytoplasmic" evidence="2">
    <location>
        <begin position="2"/>
        <end position="189"/>
    </location>
</feature>
<feature type="transmembrane region" description="Helical; Anchor for type IV membrane protein" evidence="2">
    <location>
        <begin position="190"/>
        <end position="210"/>
    </location>
</feature>
<feature type="topological domain" description="Vesicular" evidence="2">
    <location>
        <begin position="211"/>
        <end position="219"/>
    </location>
</feature>
<feature type="domain" description="Longin" evidence="3">
    <location>
        <begin position="7"/>
        <end position="111"/>
    </location>
</feature>
<feature type="domain" description="v-SNARE coiled-coil homology" evidence="4">
    <location>
        <begin position="126"/>
        <end position="186"/>
    </location>
</feature>
<feature type="modified residue" description="N-acetylalanine" evidence="13">
    <location>
        <position position="2"/>
    </location>
</feature>
<organism>
    <name type="scientific">Arabidopsis thaliana</name>
    <name type="common">Mouse-ear cress</name>
    <dbReference type="NCBI Taxonomy" id="3702"/>
    <lineage>
        <taxon>Eukaryota</taxon>
        <taxon>Viridiplantae</taxon>
        <taxon>Streptophyta</taxon>
        <taxon>Embryophyta</taxon>
        <taxon>Tracheophyta</taxon>
        <taxon>Spermatophyta</taxon>
        <taxon>Magnoliopsida</taxon>
        <taxon>eudicotyledons</taxon>
        <taxon>Gunneridae</taxon>
        <taxon>Pentapetalae</taxon>
        <taxon>rosids</taxon>
        <taxon>malvids</taxon>
        <taxon>Brassicales</taxon>
        <taxon>Brassicaceae</taxon>
        <taxon>Camelineae</taxon>
        <taxon>Arabidopsis</taxon>
    </lineage>
</organism>
<gene>
    <name evidence="7" type="primary">VAMP711</name>
    <name evidence="8" type="synonym">VAMP7C</name>
    <name evidence="11" type="ordered locus">At4g32150</name>
    <name evidence="12" type="ORF">F10N7.40</name>
</gene>
<reference key="1">
    <citation type="submission" date="1997-09" db="EMBL/GenBank/DDBJ databases">
        <authorList>
            <person name="Nikoloff D.M."/>
            <person name="Somerville C.R."/>
        </authorList>
    </citation>
    <scope>NUCLEOTIDE SEQUENCE [MRNA]</scope>
    <source>
        <tissue>Flower</tissue>
        <tissue>Rosette leaf</tissue>
        <tissue>Seedling</tissue>
        <tissue>Silique</tissue>
        <tissue>Stem</tissue>
    </source>
</reference>
<reference key="2">
    <citation type="journal article" date="1999" name="Nature">
        <title>Sequence and analysis of chromosome 4 of the plant Arabidopsis thaliana.</title>
        <authorList>
            <person name="Mayer K.F.X."/>
            <person name="Schueller C."/>
            <person name="Wambutt R."/>
            <person name="Murphy G."/>
            <person name="Volckaert G."/>
            <person name="Pohl T."/>
            <person name="Duesterhoeft A."/>
            <person name="Stiekema W."/>
            <person name="Entian K.-D."/>
            <person name="Terryn N."/>
            <person name="Harris B."/>
            <person name="Ansorge W."/>
            <person name="Brandt P."/>
            <person name="Grivell L.A."/>
            <person name="Rieger M."/>
            <person name="Weichselgartner M."/>
            <person name="de Simone V."/>
            <person name="Obermaier B."/>
            <person name="Mache R."/>
            <person name="Mueller M."/>
            <person name="Kreis M."/>
            <person name="Delseny M."/>
            <person name="Puigdomenech P."/>
            <person name="Watson M."/>
            <person name="Schmidtheini T."/>
            <person name="Reichert B."/>
            <person name="Portetelle D."/>
            <person name="Perez-Alonso M."/>
            <person name="Boutry M."/>
            <person name="Bancroft I."/>
            <person name="Vos P."/>
            <person name="Hoheisel J."/>
            <person name="Zimmermann W."/>
            <person name="Wedler H."/>
            <person name="Ridley P."/>
            <person name="Langham S.-A."/>
            <person name="McCullagh B."/>
            <person name="Bilham L."/>
            <person name="Robben J."/>
            <person name="van der Schueren J."/>
            <person name="Grymonprez B."/>
            <person name="Chuang Y.-J."/>
            <person name="Vandenbussche F."/>
            <person name="Braeken M."/>
            <person name="Weltjens I."/>
            <person name="Voet M."/>
            <person name="Bastiaens I."/>
            <person name="Aert R."/>
            <person name="Defoor E."/>
            <person name="Weitzenegger T."/>
            <person name="Bothe G."/>
            <person name="Ramsperger U."/>
            <person name="Hilbert H."/>
            <person name="Braun M."/>
            <person name="Holzer E."/>
            <person name="Brandt A."/>
            <person name="Peters S."/>
            <person name="van Staveren M."/>
            <person name="Dirkse W."/>
            <person name="Mooijman P."/>
            <person name="Klein Lankhorst R."/>
            <person name="Rose M."/>
            <person name="Hauf J."/>
            <person name="Koetter P."/>
            <person name="Berneiser S."/>
            <person name="Hempel S."/>
            <person name="Feldpausch M."/>
            <person name="Lamberth S."/>
            <person name="Van den Daele H."/>
            <person name="De Keyser A."/>
            <person name="Buysshaert C."/>
            <person name="Gielen J."/>
            <person name="Villarroel R."/>
            <person name="De Clercq R."/>
            <person name="van Montagu M."/>
            <person name="Rogers J."/>
            <person name="Cronin A."/>
            <person name="Quail M.A."/>
            <person name="Bray-Allen S."/>
            <person name="Clark L."/>
            <person name="Doggett J."/>
            <person name="Hall S."/>
            <person name="Kay M."/>
            <person name="Lennard N."/>
            <person name="McLay K."/>
            <person name="Mayes R."/>
            <person name="Pettett A."/>
            <person name="Rajandream M.A."/>
            <person name="Lyne M."/>
            <person name="Benes V."/>
            <person name="Rechmann S."/>
            <person name="Borkova D."/>
            <person name="Bloecker H."/>
            <person name="Scharfe M."/>
            <person name="Grimm M."/>
            <person name="Loehnert T.-H."/>
            <person name="Dose S."/>
            <person name="de Haan M."/>
            <person name="Maarse A.C."/>
            <person name="Schaefer M."/>
            <person name="Mueller-Auer S."/>
            <person name="Gabel C."/>
            <person name="Fuchs M."/>
            <person name="Fartmann B."/>
            <person name="Granderath K."/>
            <person name="Dauner D."/>
            <person name="Herzl A."/>
            <person name="Neumann S."/>
            <person name="Argiriou A."/>
            <person name="Vitale D."/>
            <person name="Liguori R."/>
            <person name="Piravandi E."/>
            <person name="Massenet O."/>
            <person name="Quigley F."/>
            <person name="Clabauld G."/>
            <person name="Muendlein A."/>
            <person name="Felber R."/>
            <person name="Schnabl S."/>
            <person name="Hiller R."/>
            <person name="Schmidt W."/>
            <person name="Lecharny A."/>
            <person name="Aubourg S."/>
            <person name="Chefdor F."/>
            <person name="Cooke R."/>
            <person name="Berger C."/>
            <person name="Monfort A."/>
            <person name="Casacuberta E."/>
            <person name="Gibbons T."/>
            <person name="Weber N."/>
            <person name="Vandenbol M."/>
            <person name="Bargues M."/>
            <person name="Terol J."/>
            <person name="Torres A."/>
            <person name="Perez-Perez A."/>
            <person name="Purnelle B."/>
            <person name="Bent E."/>
            <person name="Johnson S."/>
            <person name="Tacon D."/>
            <person name="Jesse T."/>
            <person name="Heijnen L."/>
            <person name="Schwarz S."/>
            <person name="Scholler P."/>
            <person name="Heber S."/>
            <person name="Francs P."/>
            <person name="Bielke C."/>
            <person name="Frishman D."/>
            <person name="Haase D."/>
            <person name="Lemcke K."/>
            <person name="Mewes H.-W."/>
            <person name="Stocker S."/>
            <person name="Zaccaria P."/>
            <person name="Bevan M."/>
            <person name="Wilson R.K."/>
            <person name="de la Bastide M."/>
            <person name="Habermann K."/>
            <person name="Parnell L."/>
            <person name="Dedhia N."/>
            <person name="Gnoj L."/>
            <person name="Schutz K."/>
            <person name="Huang E."/>
            <person name="Spiegel L."/>
            <person name="Sekhon M."/>
            <person name="Murray J."/>
            <person name="Sheet P."/>
            <person name="Cordes M."/>
            <person name="Abu-Threideh J."/>
            <person name="Stoneking T."/>
            <person name="Kalicki J."/>
            <person name="Graves T."/>
            <person name="Harmon G."/>
            <person name="Edwards J."/>
            <person name="Latreille P."/>
            <person name="Courtney L."/>
            <person name="Cloud J."/>
            <person name="Abbott A."/>
            <person name="Scott K."/>
            <person name="Johnson D."/>
            <person name="Minx P."/>
            <person name="Bentley D."/>
            <person name="Fulton B."/>
            <person name="Miller N."/>
            <person name="Greco T."/>
            <person name="Kemp K."/>
            <person name="Kramer J."/>
            <person name="Fulton L."/>
            <person name="Mardis E."/>
            <person name="Dante M."/>
            <person name="Pepin K."/>
            <person name="Hillier L.W."/>
            <person name="Nelson J."/>
            <person name="Spieth J."/>
            <person name="Ryan E."/>
            <person name="Andrews S."/>
            <person name="Geisel C."/>
            <person name="Layman D."/>
            <person name="Du H."/>
            <person name="Ali J."/>
            <person name="Berghoff A."/>
            <person name="Jones K."/>
            <person name="Drone K."/>
            <person name="Cotton M."/>
            <person name="Joshu C."/>
            <person name="Antonoiu B."/>
            <person name="Zidanic M."/>
            <person name="Strong C."/>
            <person name="Sun H."/>
            <person name="Lamar B."/>
            <person name="Yordan C."/>
            <person name="Ma P."/>
            <person name="Zhong J."/>
            <person name="Preston R."/>
            <person name="Vil D."/>
            <person name="Shekher M."/>
            <person name="Matero A."/>
            <person name="Shah R."/>
            <person name="Swaby I.K."/>
            <person name="O'Shaughnessy A."/>
            <person name="Rodriguez M."/>
            <person name="Hoffman J."/>
            <person name="Till S."/>
            <person name="Granat S."/>
            <person name="Shohdy N."/>
            <person name="Hasegawa A."/>
            <person name="Hameed A."/>
            <person name="Lodhi M."/>
            <person name="Johnson A."/>
            <person name="Chen E."/>
            <person name="Marra M.A."/>
            <person name="Martienssen R."/>
            <person name="McCombie W.R."/>
        </authorList>
    </citation>
    <scope>NUCLEOTIDE SEQUENCE [LARGE SCALE GENOMIC DNA]</scope>
    <source>
        <strain>cv. Columbia</strain>
    </source>
</reference>
<reference key="3">
    <citation type="journal article" date="2017" name="Plant J.">
        <title>Araport11: a complete reannotation of the Arabidopsis thaliana reference genome.</title>
        <authorList>
            <person name="Cheng C.Y."/>
            <person name="Krishnakumar V."/>
            <person name="Chan A.P."/>
            <person name="Thibaud-Nissen F."/>
            <person name="Schobel S."/>
            <person name="Town C.D."/>
        </authorList>
    </citation>
    <scope>GENOME REANNOTATION</scope>
    <source>
        <strain>cv. Columbia</strain>
    </source>
</reference>
<reference key="4">
    <citation type="journal article" date="2003" name="Science">
        <title>Empirical analysis of transcriptional activity in the Arabidopsis genome.</title>
        <authorList>
            <person name="Yamada K."/>
            <person name="Lim J."/>
            <person name="Dale J.M."/>
            <person name="Chen H."/>
            <person name="Shinn P."/>
            <person name="Palm C.J."/>
            <person name="Southwick A.M."/>
            <person name="Wu H.C."/>
            <person name="Kim C.J."/>
            <person name="Nguyen M."/>
            <person name="Pham P.K."/>
            <person name="Cheuk R.F."/>
            <person name="Karlin-Newmann G."/>
            <person name="Liu S.X."/>
            <person name="Lam B."/>
            <person name="Sakano H."/>
            <person name="Wu T."/>
            <person name="Yu G."/>
            <person name="Miranda M."/>
            <person name="Quach H.L."/>
            <person name="Tripp M."/>
            <person name="Chang C.H."/>
            <person name="Lee J.M."/>
            <person name="Toriumi M.J."/>
            <person name="Chan M.M."/>
            <person name="Tang C.C."/>
            <person name="Onodera C.S."/>
            <person name="Deng J.M."/>
            <person name="Akiyama K."/>
            <person name="Ansari Y."/>
            <person name="Arakawa T."/>
            <person name="Banh J."/>
            <person name="Banno F."/>
            <person name="Bowser L."/>
            <person name="Brooks S.Y."/>
            <person name="Carninci P."/>
            <person name="Chao Q."/>
            <person name="Choy N."/>
            <person name="Enju A."/>
            <person name="Goldsmith A.D."/>
            <person name="Gurjal M."/>
            <person name="Hansen N.F."/>
            <person name="Hayashizaki Y."/>
            <person name="Johnson-Hopson C."/>
            <person name="Hsuan V.W."/>
            <person name="Iida K."/>
            <person name="Karnes M."/>
            <person name="Khan S."/>
            <person name="Koesema E."/>
            <person name="Ishida J."/>
            <person name="Jiang P.X."/>
            <person name="Jones T."/>
            <person name="Kawai J."/>
            <person name="Kamiya A."/>
            <person name="Meyers C."/>
            <person name="Nakajima M."/>
            <person name="Narusaka M."/>
            <person name="Seki M."/>
            <person name="Sakurai T."/>
            <person name="Satou M."/>
            <person name="Tamse R."/>
            <person name="Vaysberg M."/>
            <person name="Wallender E.K."/>
            <person name="Wong C."/>
            <person name="Yamamura Y."/>
            <person name="Yuan S."/>
            <person name="Shinozaki K."/>
            <person name="Davis R.W."/>
            <person name="Theologis A."/>
            <person name="Ecker J.R."/>
        </authorList>
    </citation>
    <scope>NUCLEOTIDE SEQUENCE [LARGE SCALE MRNA]</scope>
    <source>
        <strain>cv. Columbia</strain>
    </source>
</reference>
<reference key="5">
    <citation type="submission" date="2002-03" db="EMBL/GenBank/DDBJ databases">
        <title>Full-length cDNA from Arabidopsis thaliana.</title>
        <authorList>
            <person name="Brover V.V."/>
            <person name="Troukhan M.E."/>
            <person name="Alexandrov N.A."/>
            <person name="Lu Y.-P."/>
            <person name="Flavell R.B."/>
            <person name="Feldmann K.A."/>
        </authorList>
    </citation>
    <scope>NUCLEOTIDE SEQUENCE [LARGE SCALE MRNA]</scope>
</reference>
<reference key="6">
    <citation type="journal article" date="2000" name="Plant Physiol.">
        <title>The Arabidopsis genome. An abundance of soluble N-ethylmaleimide-sensitive factor adaptor protein receptors.</title>
        <authorList>
            <person name="Sanderfoot A.A."/>
            <person name="Assaad F.F."/>
            <person name="Raikhel N.V."/>
        </authorList>
    </citation>
    <scope>GENE FAMILY</scope>
    <scope>NOMENCLATURE</scope>
</reference>
<reference key="7">
    <citation type="journal article" date="2004" name="Cell Struct. Funct.">
        <title>Systematic analysis of SNARE molecules in Arabidopsis: dissection of the post-Golgi network in plant cells.</title>
        <authorList>
            <person name="Uemura T."/>
            <person name="Ueda T."/>
            <person name="Ohniwa R.L."/>
            <person name="Nakano A."/>
            <person name="Takeyasu K."/>
            <person name="Sato M.H."/>
        </authorList>
    </citation>
    <scope>TISSUE SPECIFICITY</scope>
    <scope>SUBCELLULAR LOCATION</scope>
</reference>
<reference key="8">
    <citation type="journal article" date="2005" name="FEBS Lett.">
        <title>The longin domain regulates subcellular targeting of VAMP7 in Arabidopsis thaliana.</title>
        <authorList>
            <person name="Uemura T."/>
            <person name="Sato M.H."/>
            <person name="Takeyasu K."/>
        </authorList>
    </citation>
    <scope>DOMAIN</scope>
</reference>
<reference key="9">
    <citation type="journal article" date="2012" name="Mol. Cell. Proteomics">
        <title>Comparative large-scale characterisation of plant vs. mammal proteins reveals similar and idiosyncratic N-alpha acetylation features.</title>
        <authorList>
            <person name="Bienvenut W.V."/>
            <person name="Sumpton D."/>
            <person name="Martinez A."/>
            <person name="Lilla S."/>
            <person name="Espagne C."/>
            <person name="Meinnel T."/>
            <person name="Giglione C."/>
        </authorList>
    </citation>
    <scope>ACETYLATION [LARGE SCALE ANALYSIS] AT ALA-2</scope>
    <scope>CLEAVAGE OF INITIATOR METHIONINE [LARGE SCALE ANALYSIS]</scope>
    <scope>IDENTIFICATION BY MASS SPECTROMETRY [LARGE SCALE ANALYSIS]</scope>
</reference>
<keyword id="KW-0007">Acetylation</keyword>
<keyword id="KW-0175">Coiled coil</keyword>
<keyword id="KW-0472">Membrane</keyword>
<keyword id="KW-0653">Protein transport</keyword>
<keyword id="KW-1185">Reference proteome</keyword>
<keyword id="KW-0812">Transmembrane</keyword>
<keyword id="KW-1133">Transmembrane helix</keyword>
<keyword id="KW-0813">Transport</keyword>
<keyword id="KW-0926">Vacuole</keyword>